<reference key="1">
    <citation type="journal article" date="2005" name="J. Bacteriol.">
        <title>Insights on evolution of virulence and resistance from the complete genome analysis of an early methicillin-resistant Staphylococcus aureus strain and a biofilm-producing methicillin-resistant Staphylococcus epidermidis strain.</title>
        <authorList>
            <person name="Gill S.R."/>
            <person name="Fouts D.E."/>
            <person name="Archer G.L."/>
            <person name="Mongodin E.F."/>
            <person name="DeBoy R.T."/>
            <person name="Ravel J."/>
            <person name="Paulsen I.T."/>
            <person name="Kolonay J.F."/>
            <person name="Brinkac L.M."/>
            <person name="Beanan M.J."/>
            <person name="Dodson R.J."/>
            <person name="Daugherty S.C."/>
            <person name="Madupu R."/>
            <person name="Angiuoli S.V."/>
            <person name="Durkin A.S."/>
            <person name="Haft D.H."/>
            <person name="Vamathevan J.J."/>
            <person name="Khouri H."/>
            <person name="Utterback T.R."/>
            <person name="Lee C."/>
            <person name="Dimitrov G."/>
            <person name="Jiang L."/>
            <person name="Qin H."/>
            <person name="Weidman J."/>
            <person name="Tran K."/>
            <person name="Kang K.H."/>
            <person name="Hance I.R."/>
            <person name="Nelson K.E."/>
            <person name="Fraser C.M."/>
        </authorList>
    </citation>
    <scope>NUCLEOTIDE SEQUENCE [LARGE SCALE GENOMIC DNA]</scope>
    <source>
        <strain>COL</strain>
    </source>
</reference>
<name>CDSA_STAAC</name>
<keyword id="KW-1003">Cell membrane</keyword>
<keyword id="KW-0444">Lipid biosynthesis</keyword>
<keyword id="KW-0443">Lipid metabolism</keyword>
<keyword id="KW-0472">Membrane</keyword>
<keyword id="KW-0548">Nucleotidyltransferase</keyword>
<keyword id="KW-0594">Phospholipid biosynthesis</keyword>
<keyword id="KW-1208">Phospholipid metabolism</keyword>
<keyword id="KW-0808">Transferase</keyword>
<keyword id="KW-0812">Transmembrane</keyword>
<keyword id="KW-1133">Transmembrane helix</keyword>
<comment type="catalytic activity">
    <reaction>
        <text>a 1,2-diacyl-sn-glycero-3-phosphate + CTP + H(+) = a CDP-1,2-diacyl-sn-glycerol + diphosphate</text>
        <dbReference type="Rhea" id="RHEA:16229"/>
        <dbReference type="ChEBI" id="CHEBI:15378"/>
        <dbReference type="ChEBI" id="CHEBI:33019"/>
        <dbReference type="ChEBI" id="CHEBI:37563"/>
        <dbReference type="ChEBI" id="CHEBI:58332"/>
        <dbReference type="ChEBI" id="CHEBI:58608"/>
        <dbReference type="EC" id="2.7.7.41"/>
    </reaction>
</comment>
<comment type="pathway">
    <text>Phospholipid metabolism; CDP-diacylglycerol biosynthesis; CDP-diacylglycerol from sn-glycerol 3-phosphate: step 3/3.</text>
</comment>
<comment type="subcellular location">
    <subcellularLocation>
        <location evidence="1">Cell membrane</location>
        <topology evidence="1">Multi-pass membrane protein</topology>
    </subcellularLocation>
</comment>
<comment type="similarity">
    <text evidence="3">Belongs to the CDS family.</text>
</comment>
<evidence type="ECO:0000250" key="1"/>
<evidence type="ECO:0000255" key="2"/>
<evidence type="ECO:0000305" key="3"/>
<organism>
    <name type="scientific">Staphylococcus aureus (strain COL)</name>
    <dbReference type="NCBI Taxonomy" id="93062"/>
    <lineage>
        <taxon>Bacteria</taxon>
        <taxon>Bacillati</taxon>
        <taxon>Bacillota</taxon>
        <taxon>Bacilli</taxon>
        <taxon>Bacillales</taxon>
        <taxon>Staphylococcaceae</taxon>
        <taxon>Staphylococcus</taxon>
    </lineage>
</organism>
<protein>
    <recommendedName>
        <fullName>Phosphatidate cytidylyltransferase</fullName>
        <ecNumber>2.7.7.41</ecNumber>
    </recommendedName>
    <alternativeName>
        <fullName>CDP-DAG synthase</fullName>
    </alternativeName>
    <alternativeName>
        <fullName>CDP-DG synthase</fullName>
    </alternativeName>
    <alternativeName>
        <fullName>CDP-diacylglycerol synthase</fullName>
        <shortName>CDS</shortName>
    </alternativeName>
    <alternativeName>
        <fullName>CDP-diglyceride pyrophosphorylase</fullName>
    </alternativeName>
    <alternativeName>
        <fullName>CDP-diglyceride synthase</fullName>
    </alternativeName>
    <alternativeName>
        <fullName>CTP:phosphatidate cytidylyltransferase</fullName>
    </alternativeName>
</protein>
<feature type="chain" id="PRO_0000090747" description="Phosphatidate cytidylyltransferase">
    <location>
        <begin position="1"/>
        <end position="260"/>
    </location>
</feature>
<feature type="transmembrane region" description="Helical" evidence="2">
    <location>
        <begin position="9"/>
        <end position="29"/>
    </location>
</feature>
<feature type="transmembrane region" description="Helical" evidence="2">
    <location>
        <begin position="46"/>
        <end position="66"/>
    </location>
</feature>
<feature type="transmembrane region" description="Helical" evidence="2">
    <location>
        <begin position="70"/>
        <end position="90"/>
    </location>
</feature>
<feature type="transmembrane region" description="Helical" evidence="2">
    <location>
        <begin position="102"/>
        <end position="122"/>
    </location>
</feature>
<feature type="transmembrane region" description="Helical" evidence="2">
    <location>
        <begin position="130"/>
        <end position="150"/>
    </location>
</feature>
<feature type="transmembrane region" description="Helical" evidence="2">
    <location>
        <begin position="172"/>
        <end position="192"/>
    </location>
</feature>
<feature type="transmembrane region" description="Helical" evidence="2">
    <location>
        <begin position="196"/>
        <end position="216"/>
    </location>
</feature>
<gene>
    <name type="primary">cdsA</name>
    <name type="ordered locus">SACOL1280</name>
</gene>
<dbReference type="EC" id="2.7.7.41"/>
<dbReference type="EMBL" id="CP000046">
    <property type="protein sequence ID" value="AAW38111.1"/>
    <property type="molecule type" value="Genomic_DNA"/>
</dbReference>
<dbReference type="RefSeq" id="WP_000868413.1">
    <property type="nucleotide sequence ID" value="NZ_JBGOFO010000002.1"/>
</dbReference>
<dbReference type="SMR" id="Q5HGH0"/>
<dbReference type="KEGG" id="sac:SACOL1280"/>
<dbReference type="HOGENOM" id="CLU_037294_2_2_9"/>
<dbReference type="UniPathway" id="UPA00557">
    <property type="reaction ID" value="UER00614"/>
</dbReference>
<dbReference type="Proteomes" id="UP000000530">
    <property type="component" value="Chromosome"/>
</dbReference>
<dbReference type="GO" id="GO:0005886">
    <property type="term" value="C:plasma membrane"/>
    <property type="evidence" value="ECO:0007669"/>
    <property type="project" value="UniProtKB-SubCell"/>
</dbReference>
<dbReference type="GO" id="GO:0004605">
    <property type="term" value="F:phosphatidate cytidylyltransferase activity"/>
    <property type="evidence" value="ECO:0007669"/>
    <property type="project" value="UniProtKB-EC"/>
</dbReference>
<dbReference type="GO" id="GO:0016024">
    <property type="term" value="P:CDP-diacylglycerol biosynthetic process"/>
    <property type="evidence" value="ECO:0007669"/>
    <property type="project" value="UniProtKB-UniPathway"/>
</dbReference>
<dbReference type="InterPro" id="IPR000374">
    <property type="entry name" value="PC_trans"/>
</dbReference>
<dbReference type="PANTHER" id="PTHR46382">
    <property type="entry name" value="PHOSPHATIDATE CYTIDYLYLTRANSFERASE"/>
    <property type="match status" value="1"/>
</dbReference>
<dbReference type="PANTHER" id="PTHR46382:SF1">
    <property type="entry name" value="PHOSPHATIDATE CYTIDYLYLTRANSFERASE"/>
    <property type="match status" value="1"/>
</dbReference>
<dbReference type="Pfam" id="PF01148">
    <property type="entry name" value="CTP_transf_1"/>
    <property type="match status" value="1"/>
</dbReference>
<dbReference type="PROSITE" id="PS01315">
    <property type="entry name" value="CDS"/>
    <property type="match status" value="1"/>
</dbReference>
<accession>Q5HGH0</accession>
<proteinExistence type="inferred from homology"/>
<sequence>MKVRTLTAIIALIVFLPILLKGGLVLMIFANILALIALKELLNMNMIKFVSVPGLISAVGLIIIMLPQHAGPWVQVIQLKSLIAMSFIVLSYTVLSKNRFSFMDAAFCLMSVAYVGIGFMFFYETRSEGLHYILYAFLIVWLTDTGAYLFGKMMGKHKLWPVISPNKTIEGFIGGLFCSLIVPLAMLYFVDFNMNVWILLGVTLILSLFGQLGDLVESGFKRHFGVKDSGRILPGHGGILDRFDSFMFVLPLLNILLIQS</sequence>